<sequence length="242" mass="27215">MSAVDYGREALDFIEGLGVYRKVPDAMNALEAAFGRFGFETIIVTGLPNPDQRFAQMVLAKRWPAGWFNLYTQNNYDRFDPVVRLCRQSVNPFEWSEAPYDAELEPSAAEVMNRAGDFRMSRGFIVPIHGLTGYEAAVSLGGVHLDLNPRSKPALHLMAMYGFDHIRRLLEPTPYPSTRLTPREREVISWASQGKSAWEIGEILHITQRTAEEHLATAARKLGAVNRTHAVALAIRHKIINP</sequence>
<keyword id="KW-0010">Activator</keyword>
<keyword id="KW-0238">DNA-binding</keyword>
<keyword id="KW-0673">Quorum sensing</keyword>
<keyword id="KW-1185">Reference proteome</keyword>
<keyword id="KW-0804">Transcription</keyword>
<keyword id="KW-0805">Transcription regulation</keyword>
<dbReference type="EMBL" id="BA000040">
    <property type="protein sequence ID" value="BAC46327.1"/>
    <property type="molecule type" value="Genomic_DNA"/>
</dbReference>
<dbReference type="RefSeq" id="NP_767702.1">
    <property type="nucleotide sequence ID" value="NC_004463.1"/>
</dbReference>
<dbReference type="RefSeq" id="WP_011083882.1">
    <property type="nucleotide sequence ID" value="NC_004463.1"/>
</dbReference>
<dbReference type="SMR" id="Q89VI3"/>
<dbReference type="FunCoup" id="Q89VI3">
    <property type="interactions" value="234"/>
</dbReference>
<dbReference type="STRING" id="224911.AAV28_02160"/>
<dbReference type="EnsemblBacteria" id="BAC46327">
    <property type="protein sequence ID" value="BAC46327"/>
    <property type="gene ID" value="BAC46327"/>
</dbReference>
<dbReference type="GeneID" id="46488331"/>
<dbReference type="KEGG" id="bja:blr1062"/>
<dbReference type="PATRIC" id="fig|224911.44.peg.457"/>
<dbReference type="eggNOG" id="COG2197">
    <property type="taxonomic scope" value="Bacteria"/>
</dbReference>
<dbReference type="HOGENOM" id="CLU_072786_4_1_5"/>
<dbReference type="InParanoid" id="Q89VI3"/>
<dbReference type="OrthoDB" id="3170288at2"/>
<dbReference type="PhylomeDB" id="Q89VI3"/>
<dbReference type="Proteomes" id="UP000002526">
    <property type="component" value="Chromosome"/>
</dbReference>
<dbReference type="GO" id="GO:0003677">
    <property type="term" value="F:DNA binding"/>
    <property type="evidence" value="ECO:0007669"/>
    <property type="project" value="UniProtKB-KW"/>
</dbReference>
<dbReference type="GO" id="GO:0009372">
    <property type="term" value="P:quorum sensing"/>
    <property type="evidence" value="ECO:0007669"/>
    <property type="project" value="UniProtKB-KW"/>
</dbReference>
<dbReference type="GO" id="GO:0006355">
    <property type="term" value="P:regulation of DNA-templated transcription"/>
    <property type="evidence" value="ECO:0007669"/>
    <property type="project" value="InterPro"/>
</dbReference>
<dbReference type="CDD" id="cd06170">
    <property type="entry name" value="LuxR_C_like"/>
    <property type="match status" value="1"/>
</dbReference>
<dbReference type="Gene3D" id="3.30.450.80">
    <property type="entry name" value="Transcription factor LuxR-like, autoinducer-binding domain"/>
    <property type="match status" value="1"/>
</dbReference>
<dbReference type="Gene3D" id="1.10.10.10">
    <property type="entry name" value="Winged helix-like DNA-binding domain superfamily/Winged helix DNA-binding domain"/>
    <property type="match status" value="1"/>
</dbReference>
<dbReference type="InterPro" id="IPR016032">
    <property type="entry name" value="Sig_transdc_resp-reg_C-effctor"/>
</dbReference>
<dbReference type="InterPro" id="IPR005143">
    <property type="entry name" value="TF_LuxR_autoind-bd_dom"/>
</dbReference>
<dbReference type="InterPro" id="IPR036693">
    <property type="entry name" value="TF_LuxR_autoind-bd_dom_sf"/>
</dbReference>
<dbReference type="InterPro" id="IPR000792">
    <property type="entry name" value="Tscrpt_reg_LuxR_C"/>
</dbReference>
<dbReference type="InterPro" id="IPR036388">
    <property type="entry name" value="WH-like_DNA-bd_sf"/>
</dbReference>
<dbReference type="PANTHER" id="PTHR44688">
    <property type="entry name" value="DNA-BINDING TRANSCRIPTIONAL ACTIVATOR DEVR_DOSR"/>
    <property type="match status" value="1"/>
</dbReference>
<dbReference type="PANTHER" id="PTHR44688:SF16">
    <property type="entry name" value="DNA-BINDING TRANSCRIPTIONAL ACTIVATOR DEVR_DOSR"/>
    <property type="match status" value="1"/>
</dbReference>
<dbReference type="Pfam" id="PF03472">
    <property type="entry name" value="Autoind_bind"/>
    <property type="match status" value="1"/>
</dbReference>
<dbReference type="Pfam" id="PF00196">
    <property type="entry name" value="GerE"/>
    <property type="match status" value="1"/>
</dbReference>
<dbReference type="PRINTS" id="PR00038">
    <property type="entry name" value="HTHLUXR"/>
</dbReference>
<dbReference type="SMART" id="SM00421">
    <property type="entry name" value="HTH_LUXR"/>
    <property type="match status" value="1"/>
</dbReference>
<dbReference type="SUPFAM" id="SSF46894">
    <property type="entry name" value="C-terminal effector domain of the bipartite response regulators"/>
    <property type="match status" value="1"/>
</dbReference>
<dbReference type="SUPFAM" id="SSF75516">
    <property type="entry name" value="Pheromone-binding domain of LuxR-like quorum-sensing transcription factors"/>
    <property type="match status" value="1"/>
</dbReference>
<dbReference type="PROSITE" id="PS50043">
    <property type="entry name" value="HTH_LUXR_2"/>
    <property type="match status" value="1"/>
</dbReference>
<gene>
    <name type="primary">bjaR1</name>
    <name type="ordered locus">blr1062</name>
</gene>
<accession>Q89VI3</accession>
<comment type="function">
    <text evidence="2">Transcriptional activator that functions in response to the quorum-sensing autoinducer IV-HSL (isovaleryl-homoserine lactone). Activates BjaI expression. Is sensitive to IV-HSL at concentrations as low as 10 pM.</text>
</comment>
<comment type="disruption phenotype">
    <text evidence="2">In cells lacking this gene, bjaI expression is about 15% of the level in wild-type cells and IV-HSL is &lt;25% of wild-type levels.</text>
</comment>
<comment type="similarity">
    <text evidence="3">Belongs to the autoinducer-regulated transcriptional regulatory protein family.</text>
</comment>
<name>BJAR1_BRADU</name>
<protein>
    <recommendedName>
        <fullName>Transcriptional activator protein BjaR1</fullName>
    </recommendedName>
    <alternativeName>
        <fullName>HTH-type quorum sensing-dependent transcriptional regulator BjaR1</fullName>
    </alternativeName>
</protein>
<reference key="1">
    <citation type="journal article" date="2002" name="DNA Res.">
        <title>Complete genomic sequence of nitrogen-fixing symbiotic bacterium Bradyrhizobium japonicum USDA110.</title>
        <authorList>
            <person name="Kaneko T."/>
            <person name="Nakamura Y."/>
            <person name="Sato S."/>
            <person name="Minamisawa K."/>
            <person name="Uchiumi T."/>
            <person name="Sasamoto S."/>
            <person name="Watanabe A."/>
            <person name="Idesawa K."/>
            <person name="Iriguchi M."/>
            <person name="Kawashima K."/>
            <person name="Kohara M."/>
            <person name="Matsumoto M."/>
            <person name="Shimpo S."/>
            <person name="Tsuruoka H."/>
            <person name="Wada T."/>
            <person name="Yamada M."/>
            <person name="Tabata S."/>
        </authorList>
    </citation>
    <scope>NUCLEOTIDE SEQUENCE [LARGE SCALE GENOMIC DNA]</scope>
    <source>
        <strain>JCM 10833 / BCRC 13528 / IAM 13628 / NBRC 14792 / USDA 110</strain>
    </source>
</reference>
<reference key="2">
    <citation type="journal article" date="2011" name="Proc. Natl. Acad. Sci. U.S.A.">
        <title>Isovaleryl-homoserine lactone, an unusual branched-chain quorum-sensing signal from the soybean symbiont Bradyrhizobium japonicum.</title>
        <authorList>
            <person name="Lindemann A."/>
            <person name="Pessi G."/>
            <person name="Schaefer A.L."/>
            <person name="Mattmann M.E."/>
            <person name="Christensen Q.H."/>
            <person name="Kessler A."/>
            <person name="Hennecke H."/>
            <person name="Blackwell H.E."/>
            <person name="Greenberg E.P."/>
            <person name="Harwood C.S."/>
        </authorList>
    </citation>
    <scope>FUNCTION</scope>
    <scope>GENE NAME</scope>
    <scope>DISRUPTION PHENOTYPE</scope>
    <source>
        <strain>JCM 10833 / BCRC 13528 / IAM 13628 / NBRC 14792 / USDA 110</strain>
    </source>
</reference>
<feature type="chain" id="PRO_0000422391" description="Transcriptional activator protein BjaR1">
    <location>
        <begin position="1"/>
        <end position="242"/>
    </location>
</feature>
<feature type="domain" description="HTH luxR-type" evidence="1">
    <location>
        <begin position="173"/>
        <end position="238"/>
    </location>
</feature>
<feature type="DNA-binding region" description="H-T-H motif" evidence="1">
    <location>
        <begin position="197"/>
        <end position="216"/>
    </location>
</feature>
<evidence type="ECO:0000255" key="1">
    <source>
        <dbReference type="PROSITE-ProRule" id="PRU00411"/>
    </source>
</evidence>
<evidence type="ECO:0000269" key="2">
    <source>
    </source>
</evidence>
<evidence type="ECO:0000305" key="3"/>
<organism>
    <name type="scientific">Bradyrhizobium diazoefficiens (strain JCM 10833 / BCRC 13528 / IAM 13628 / NBRC 14792 / USDA 110)</name>
    <dbReference type="NCBI Taxonomy" id="224911"/>
    <lineage>
        <taxon>Bacteria</taxon>
        <taxon>Pseudomonadati</taxon>
        <taxon>Pseudomonadota</taxon>
        <taxon>Alphaproteobacteria</taxon>
        <taxon>Hyphomicrobiales</taxon>
        <taxon>Nitrobacteraceae</taxon>
        <taxon>Bradyrhizobium</taxon>
    </lineage>
</organism>
<proteinExistence type="inferred from homology"/>